<gene>
    <name evidence="1" type="primary">aroC</name>
    <name type="ordered locus">NFA_36350</name>
</gene>
<protein>
    <recommendedName>
        <fullName evidence="1">Chorismate synthase</fullName>
        <shortName evidence="1">CS</shortName>
        <ecNumber evidence="1">4.2.3.5</ecNumber>
    </recommendedName>
    <alternativeName>
        <fullName evidence="1">5-enolpyruvylshikimate-3-phosphate phospholyase</fullName>
    </alternativeName>
</protein>
<name>AROC_NOCFA</name>
<sequence>MEAVLRWITAGESHGPALVAILEGMVAGVEVTSEDISAQLARRRLGYGRGARMKFEADKVTMVGGVRHGRTMGGPVAIEVANSEWPKWTTVMSADPVDPAELADLARNAPLTRPRPGHADYSGMLKYNFDDARNVLERASARETAARVAAGTVARNFLRQALGVEVVSHVVAIGTAANTTGVVPTAADLATVDESPVRAFDAAAEAAMIAEIEAAKKDGDTLGGVVEVIVEGLPVGLGSFTSGENRLDSRLAAALMGIQAIKGVEVGDGFETARRRGSQAHDEMRPGPDGVLRSTNRAGGLEGGMTNGEPLRVRAAMKPISTVPRALATVDMTTGEEAVAIHQRSDVCAVPAAGVVAEAMVALVVAQAALEKFGGDSLTETVDNITSYVKRISTRPHVPADSRPQ</sequence>
<comment type="function">
    <text evidence="1">Catalyzes the anti-1,4-elimination of the C-3 phosphate and the C-6 proR hydrogen from 5-enolpyruvylshikimate-3-phosphate (EPSP) to yield chorismate, which is the branch point compound that serves as the starting substrate for the three terminal pathways of aromatic amino acid biosynthesis. This reaction introduces a second double bond into the aromatic ring system.</text>
</comment>
<comment type="catalytic activity">
    <reaction evidence="1">
        <text>5-O-(1-carboxyvinyl)-3-phosphoshikimate = chorismate + phosphate</text>
        <dbReference type="Rhea" id="RHEA:21020"/>
        <dbReference type="ChEBI" id="CHEBI:29748"/>
        <dbReference type="ChEBI" id="CHEBI:43474"/>
        <dbReference type="ChEBI" id="CHEBI:57701"/>
        <dbReference type="EC" id="4.2.3.5"/>
    </reaction>
</comment>
<comment type="cofactor">
    <cofactor evidence="1">
        <name>FMNH2</name>
        <dbReference type="ChEBI" id="CHEBI:57618"/>
    </cofactor>
    <text evidence="1">Reduced FMN (FMNH(2)).</text>
</comment>
<comment type="pathway">
    <text evidence="1">Metabolic intermediate biosynthesis; chorismate biosynthesis; chorismate from D-erythrose 4-phosphate and phosphoenolpyruvate: step 7/7.</text>
</comment>
<comment type="subunit">
    <text evidence="1">Homotetramer.</text>
</comment>
<comment type="similarity">
    <text evidence="1">Belongs to the chorismate synthase family.</text>
</comment>
<proteinExistence type="inferred from homology"/>
<reference key="1">
    <citation type="journal article" date="2004" name="Proc. Natl. Acad. Sci. U.S.A.">
        <title>The complete genomic sequence of Nocardia farcinica IFM 10152.</title>
        <authorList>
            <person name="Ishikawa J."/>
            <person name="Yamashita A."/>
            <person name="Mikami Y."/>
            <person name="Hoshino Y."/>
            <person name="Kurita H."/>
            <person name="Hotta K."/>
            <person name="Shiba T."/>
            <person name="Hattori M."/>
        </authorList>
    </citation>
    <scope>NUCLEOTIDE SEQUENCE [LARGE SCALE GENOMIC DNA]</scope>
    <source>
        <strain>IFM 10152</strain>
    </source>
</reference>
<evidence type="ECO:0000255" key="1">
    <source>
        <dbReference type="HAMAP-Rule" id="MF_00300"/>
    </source>
</evidence>
<evidence type="ECO:0000256" key="2">
    <source>
        <dbReference type="SAM" id="MobiDB-lite"/>
    </source>
</evidence>
<accession>Q5YTK8</accession>
<dbReference type="EC" id="4.2.3.5" evidence="1"/>
<dbReference type="EMBL" id="AP006618">
    <property type="protein sequence ID" value="BAD58483.1"/>
    <property type="molecule type" value="Genomic_DNA"/>
</dbReference>
<dbReference type="SMR" id="Q5YTK8"/>
<dbReference type="STRING" id="247156.NFA_36350"/>
<dbReference type="KEGG" id="nfa:NFA_36350"/>
<dbReference type="eggNOG" id="COG0082">
    <property type="taxonomic scope" value="Bacteria"/>
</dbReference>
<dbReference type="HOGENOM" id="CLU_034547_2_0_11"/>
<dbReference type="UniPathway" id="UPA00053">
    <property type="reaction ID" value="UER00090"/>
</dbReference>
<dbReference type="Proteomes" id="UP000006820">
    <property type="component" value="Chromosome"/>
</dbReference>
<dbReference type="GO" id="GO:0005829">
    <property type="term" value="C:cytosol"/>
    <property type="evidence" value="ECO:0007669"/>
    <property type="project" value="TreeGrafter"/>
</dbReference>
<dbReference type="GO" id="GO:0004107">
    <property type="term" value="F:chorismate synthase activity"/>
    <property type="evidence" value="ECO:0007669"/>
    <property type="project" value="UniProtKB-UniRule"/>
</dbReference>
<dbReference type="GO" id="GO:0010181">
    <property type="term" value="F:FMN binding"/>
    <property type="evidence" value="ECO:0007669"/>
    <property type="project" value="TreeGrafter"/>
</dbReference>
<dbReference type="GO" id="GO:0008652">
    <property type="term" value="P:amino acid biosynthetic process"/>
    <property type="evidence" value="ECO:0007669"/>
    <property type="project" value="UniProtKB-KW"/>
</dbReference>
<dbReference type="GO" id="GO:0009073">
    <property type="term" value="P:aromatic amino acid family biosynthetic process"/>
    <property type="evidence" value="ECO:0007669"/>
    <property type="project" value="UniProtKB-KW"/>
</dbReference>
<dbReference type="GO" id="GO:0009423">
    <property type="term" value="P:chorismate biosynthetic process"/>
    <property type="evidence" value="ECO:0007669"/>
    <property type="project" value="UniProtKB-UniRule"/>
</dbReference>
<dbReference type="CDD" id="cd07304">
    <property type="entry name" value="Chorismate_synthase"/>
    <property type="match status" value="1"/>
</dbReference>
<dbReference type="FunFam" id="3.60.150.10:FF:000002">
    <property type="entry name" value="Chorismate synthase"/>
    <property type="match status" value="1"/>
</dbReference>
<dbReference type="Gene3D" id="3.60.150.10">
    <property type="entry name" value="Chorismate synthase AroC"/>
    <property type="match status" value="1"/>
</dbReference>
<dbReference type="HAMAP" id="MF_00300">
    <property type="entry name" value="Chorismate_synth"/>
    <property type="match status" value="1"/>
</dbReference>
<dbReference type="InterPro" id="IPR000453">
    <property type="entry name" value="Chorismate_synth"/>
</dbReference>
<dbReference type="InterPro" id="IPR035904">
    <property type="entry name" value="Chorismate_synth_AroC_sf"/>
</dbReference>
<dbReference type="InterPro" id="IPR020541">
    <property type="entry name" value="Chorismate_synthase_CS"/>
</dbReference>
<dbReference type="NCBIfam" id="TIGR00033">
    <property type="entry name" value="aroC"/>
    <property type="match status" value="1"/>
</dbReference>
<dbReference type="NCBIfam" id="NF003793">
    <property type="entry name" value="PRK05382.1"/>
    <property type="match status" value="1"/>
</dbReference>
<dbReference type="PANTHER" id="PTHR21085">
    <property type="entry name" value="CHORISMATE SYNTHASE"/>
    <property type="match status" value="1"/>
</dbReference>
<dbReference type="PANTHER" id="PTHR21085:SF0">
    <property type="entry name" value="CHORISMATE SYNTHASE"/>
    <property type="match status" value="1"/>
</dbReference>
<dbReference type="Pfam" id="PF01264">
    <property type="entry name" value="Chorismate_synt"/>
    <property type="match status" value="1"/>
</dbReference>
<dbReference type="PIRSF" id="PIRSF001456">
    <property type="entry name" value="Chorismate_synth"/>
    <property type="match status" value="1"/>
</dbReference>
<dbReference type="SUPFAM" id="SSF103263">
    <property type="entry name" value="Chorismate synthase, AroC"/>
    <property type="match status" value="1"/>
</dbReference>
<dbReference type="PROSITE" id="PS00787">
    <property type="entry name" value="CHORISMATE_SYNTHASE_1"/>
    <property type="match status" value="1"/>
</dbReference>
<dbReference type="PROSITE" id="PS00788">
    <property type="entry name" value="CHORISMATE_SYNTHASE_2"/>
    <property type="match status" value="1"/>
</dbReference>
<dbReference type="PROSITE" id="PS00789">
    <property type="entry name" value="CHORISMATE_SYNTHASE_3"/>
    <property type="match status" value="1"/>
</dbReference>
<organism>
    <name type="scientific">Nocardia farcinica (strain IFM 10152)</name>
    <dbReference type="NCBI Taxonomy" id="247156"/>
    <lineage>
        <taxon>Bacteria</taxon>
        <taxon>Bacillati</taxon>
        <taxon>Actinomycetota</taxon>
        <taxon>Actinomycetes</taxon>
        <taxon>Mycobacteriales</taxon>
        <taxon>Nocardiaceae</taxon>
        <taxon>Nocardia</taxon>
    </lineage>
</organism>
<keyword id="KW-0028">Amino-acid biosynthesis</keyword>
<keyword id="KW-0057">Aromatic amino acid biosynthesis</keyword>
<keyword id="KW-0274">FAD</keyword>
<keyword id="KW-0285">Flavoprotein</keyword>
<keyword id="KW-0288">FMN</keyword>
<keyword id="KW-0456">Lyase</keyword>
<keyword id="KW-0521">NADP</keyword>
<keyword id="KW-1185">Reference proteome</keyword>
<feature type="chain" id="PRO_0000140620" description="Chorismate synthase">
    <location>
        <begin position="1"/>
        <end position="405"/>
    </location>
</feature>
<feature type="region of interest" description="Disordered" evidence="2">
    <location>
        <begin position="275"/>
        <end position="308"/>
    </location>
</feature>
<feature type="compositionally biased region" description="Basic and acidic residues" evidence="2">
    <location>
        <begin position="275"/>
        <end position="286"/>
    </location>
</feature>
<feature type="binding site" evidence="1">
    <location>
        <position position="43"/>
    </location>
    <ligand>
        <name>NADP(+)</name>
        <dbReference type="ChEBI" id="CHEBI:58349"/>
    </ligand>
</feature>
<feature type="binding site" evidence="1">
    <location>
        <position position="49"/>
    </location>
    <ligand>
        <name>NADP(+)</name>
        <dbReference type="ChEBI" id="CHEBI:58349"/>
    </ligand>
</feature>
<feature type="binding site" evidence="1">
    <location>
        <begin position="138"/>
        <end position="140"/>
    </location>
    <ligand>
        <name>FMN</name>
        <dbReference type="ChEBI" id="CHEBI:58210"/>
    </ligand>
</feature>
<feature type="binding site" evidence="1">
    <location>
        <begin position="259"/>
        <end position="260"/>
    </location>
    <ligand>
        <name>FMN</name>
        <dbReference type="ChEBI" id="CHEBI:58210"/>
    </ligand>
</feature>
<feature type="binding site" evidence="1">
    <location>
        <position position="303"/>
    </location>
    <ligand>
        <name>FMN</name>
        <dbReference type="ChEBI" id="CHEBI:58210"/>
    </ligand>
</feature>
<feature type="binding site" evidence="1">
    <location>
        <begin position="318"/>
        <end position="322"/>
    </location>
    <ligand>
        <name>FMN</name>
        <dbReference type="ChEBI" id="CHEBI:58210"/>
    </ligand>
</feature>
<feature type="binding site" evidence="1">
    <location>
        <position position="344"/>
    </location>
    <ligand>
        <name>FMN</name>
        <dbReference type="ChEBI" id="CHEBI:58210"/>
    </ligand>
</feature>